<proteinExistence type="evidence at protein level"/>
<evidence type="ECO:0000255" key="1">
    <source>
        <dbReference type="HAMAP-Rule" id="MF_03195"/>
    </source>
</evidence>
<evidence type="ECO:0000269" key="2">
    <source>
    </source>
</evidence>
<evidence type="ECO:0000269" key="3">
    <source>
    </source>
</evidence>
<evidence type="ECO:0000269" key="4">
    <source>
    </source>
</evidence>
<evidence type="ECO:0000269" key="5">
    <source>
    </source>
</evidence>
<evidence type="ECO:0000303" key="6">
    <source>
    </source>
</evidence>
<evidence type="ECO:0000303" key="7">
    <source ref="4"/>
</evidence>
<evidence type="ECO:0000305" key="8"/>
<evidence type="ECO:0007744" key="9">
    <source>
    </source>
</evidence>
<evidence type="ECO:0007829" key="10">
    <source>
        <dbReference type="PDB" id="2A7R"/>
    </source>
</evidence>
<evidence type="ECO:0007829" key="11">
    <source>
        <dbReference type="PDB" id="2C6Q"/>
    </source>
</evidence>
<feature type="chain" id="PRO_0000093726" description="GMP reductase 2">
    <location>
        <begin position="1"/>
        <end position="348"/>
    </location>
</feature>
<feature type="active site" description="Thioimidate intermediate" evidence="1">
    <location>
        <position position="186"/>
    </location>
</feature>
<feature type="active site" description="Proton donor/acceptor" evidence="1">
    <location>
        <position position="188"/>
    </location>
</feature>
<feature type="binding site" evidence="1 5">
    <location>
        <begin position="26"/>
        <end position="27"/>
    </location>
    <ligand>
        <name>NADP(+)</name>
        <dbReference type="ChEBI" id="CHEBI:58349"/>
        <note>ligand shared between two neighboring subunits</note>
    </ligand>
</feature>
<feature type="binding site" description="in other chain" evidence="1 5">
    <location>
        <position position="78"/>
    </location>
    <ligand>
        <name>NADP(+)</name>
        <dbReference type="ChEBI" id="CHEBI:58349"/>
        <note>ligand shared between two neighboring subunits</note>
    </ligand>
</feature>
<feature type="binding site" description="in other chain" evidence="1 5">
    <location>
        <begin position="129"/>
        <end position="131"/>
    </location>
    <ligand>
        <name>NADP(+)</name>
        <dbReference type="ChEBI" id="CHEBI:58349"/>
        <note>ligand shared between two neighboring subunits</note>
    </ligand>
</feature>
<feature type="binding site" description="in other chain" evidence="1 5">
    <location>
        <begin position="180"/>
        <end position="181"/>
    </location>
    <ligand>
        <name>NADP(+)</name>
        <dbReference type="ChEBI" id="CHEBI:58349"/>
        <note>ligand shared between two neighboring subunits</note>
    </ligand>
</feature>
<feature type="binding site" evidence="1">
    <location>
        <position position="181"/>
    </location>
    <ligand>
        <name>K(+)</name>
        <dbReference type="ChEBI" id="CHEBI:29103"/>
    </ligand>
</feature>
<feature type="binding site" evidence="1">
    <location>
        <position position="183"/>
    </location>
    <ligand>
        <name>K(+)</name>
        <dbReference type="ChEBI" id="CHEBI:29103"/>
    </ligand>
</feature>
<feature type="binding site" evidence="1">
    <location>
        <position position="186"/>
    </location>
    <ligand>
        <name>K(+)</name>
        <dbReference type="ChEBI" id="CHEBI:29103"/>
    </ligand>
</feature>
<feature type="binding site" evidence="1">
    <location>
        <position position="189"/>
    </location>
    <ligand>
        <name>K(+)</name>
        <dbReference type="ChEBI" id="CHEBI:29103"/>
    </ligand>
</feature>
<feature type="binding site" evidence="1">
    <location>
        <begin position="219"/>
        <end position="221"/>
    </location>
    <ligand>
        <name>GMP</name>
        <dbReference type="ChEBI" id="CHEBI:58115"/>
    </ligand>
</feature>
<feature type="binding site" evidence="1">
    <location>
        <begin position="242"/>
        <end position="243"/>
    </location>
    <ligand>
        <name>GMP</name>
        <dbReference type="ChEBI" id="CHEBI:58115"/>
    </ligand>
</feature>
<feature type="binding site" evidence="1">
    <location>
        <begin position="268"/>
        <end position="270"/>
    </location>
    <ligand>
        <name>GMP</name>
        <dbReference type="ChEBI" id="CHEBI:58115"/>
    </ligand>
</feature>
<feature type="binding site" description="in other chain" evidence="1 5">
    <location>
        <position position="269"/>
    </location>
    <ligand>
        <name>NADP(+)</name>
        <dbReference type="ChEBI" id="CHEBI:58349"/>
        <note>ligand shared between two neighboring subunits</note>
    </ligand>
</feature>
<feature type="binding site" description="in other chain" evidence="1 5">
    <location>
        <begin position="285"/>
        <end position="286"/>
    </location>
    <ligand>
        <name>NADP(+)</name>
        <dbReference type="ChEBI" id="CHEBI:58349"/>
        <note>ligand shared between two neighboring subunits</note>
    </ligand>
</feature>
<feature type="binding site" evidence="1">
    <location>
        <begin position="286"/>
        <end position="290"/>
    </location>
    <ligand>
        <name>GMP</name>
        <dbReference type="ChEBI" id="CHEBI:58115"/>
    </ligand>
</feature>
<feature type="binding site" evidence="1 5">
    <location>
        <begin position="314"/>
        <end position="317"/>
    </location>
    <ligand>
        <name>NADP(+)</name>
        <dbReference type="ChEBI" id="CHEBI:58349"/>
        <note>ligand shared between two neighboring subunits</note>
    </ligand>
</feature>
<feature type="modified residue" description="N6-acetyllysine" evidence="9">
    <location>
        <position position="291"/>
    </location>
</feature>
<feature type="splice variant" id="VSP_041459" description="In isoform 2." evidence="6">
    <original>M</original>
    <variation>MTSCLPALRFIATPRLSAM</variation>
    <location>
        <position position="1"/>
    </location>
</feature>
<feature type="splice variant" id="VSP_054585" description="In isoform 3." evidence="7">
    <location>
        <begin position="70"/>
        <end position="97"/>
    </location>
</feature>
<feature type="sequence variant" id="VAR_049602" description="In dbSNP:rs34354104.">
    <original>G</original>
    <variation>D</variation>
    <location>
        <position position="242"/>
    </location>
</feature>
<feature type="mutagenesis site" description="Loss of enzyme activity." evidence="4 5">
    <original>C</original>
    <variation>A</variation>
    <location>
        <position position="186"/>
    </location>
</feature>
<feature type="mutagenesis site" description="Loss of enzyme activity." evidence="5">
    <original>T</original>
    <variation>A</variation>
    <location>
        <position position="188"/>
    </location>
</feature>
<feature type="mutagenesis site" description="Loss of enzyme activity." evidence="5">
    <original>E</original>
    <variation>Q</variation>
    <location>
        <position position="289"/>
    </location>
</feature>
<feature type="sequence conflict" description="In Ref. 5; CAG33437." evidence="8" ref="5">
    <original>Q</original>
    <variation>R</variation>
    <location>
        <position position="91"/>
    </location>
</feature>
<feature type="sequence conflict" description="In Ref. 5; CAG33437." evidence="8" ref="5">
    <original>S</original>
    <variation>G</variation>
    <location>
        <position position="200"/>
    </location>
</feature>
<feature type="sequence conflict" description="In Ref. 5; CAG33437." evidence="8" ref="5">
    <original>S</original>
    <variation>N</variation>
    <location>
        <position position="223"/>
    </location>
</feature>
<feature type="strand" evidence="10">
    <location>
        <begin position="3"/>
        <end position="9"/>
    </location>
</feature>
<feature type="helix" evidence="11">
    <location>
        <begin position="12"/>
        <end position="14"/>
    </location>
</feature>
<feature type="strand" evidence="11">
    <location>
        <begin position="15"/>
        <end position="17"/>
    </location>
</feature>
<feature type="helix" evidence="11">
    <location>
        <begin position="27"/>
        <end position="29"/>
    </location>
</feature>
<feature type="strand" evidence="11">
    <location>
        <begin position="34"/>
        <end position="37"/>
    </location>
</feature>
<feature type="turn" evidence="11">
    <location>
        <begin position="39"/>
        <end position="41"/>
    </location>
</feature>
<feature type="strand" evidence="11">
    <location>
        <begin position="44"/>
        <end position="47"/>
    </location>
</feature>
<feature type="strand" evidence="11">
    <location>
        <begin position="50"/>
        <end position="52"/>
    </location>
</feature>
<feature type="turn" evidence="11">
    <location>
        <begin position="56"/>
        <end position="58"/>
    </location>
</feature>
<feature type="helix" evidence="11">
    <location>
        <begin position="61"/>
        <end position="69"/>
    </location>
</feature>
<feature type="strand" evidence="11">
    <location>
        <begin position="73"/>
        <end position="75"/>
    </location>
</feature>
<feature type="helix" evidence="11">
    <location>
        <begin position="82"/>
        <end position="91"/>
    </location>
</feature>
<feature type="helix" evidence="11">
    <location>
        <begin position="93"/>
        <end position="95"/>
    </location>
</feature>
<feature type="strand" evidence="11">
    <location>
        <begin position="99"/>
        <end position="103"/>
    </location>
</feature>
<feature type="helix" evidence="11">
    <location>
        <begin position="107"/>
        <end position="119"/>
    </location>
</feature>
<feature type="strand" evidence="11">
    <location>
        <begin position="125"/>
        <end position="129"/>
    </location>
</feature>
<feature type="helix" evidence="11">
    <location>
        <begin position="136"/>
        <end position="148"/>
    </location>
</feature>
<feature type="strand" evidence="11">
    <location>
        <begin position="152"/>
        <end position="159"/>
    </location>
</feature>
<feature type="helix" evidence="11">
    <location>
        <begin position="162"/>
        <end position="170"/>
    </location>
</feature>
<feature type="strand" evidence="11">
    <location>
        <begin position="174"/>
        <end position="178"/>
    </location>
</feature>
<feature type="helix" evidence="11">
    <location>
        <begin position="188"/>
        <end position="192"/>
    </location>
</feature>
<feature type="helix" evidence="11">
    <location>
        <begin position="198"/>
        <end position="211"/>
    </location>
</feature>
<feature type="strand" evidence="11">
    <location>
        <begin position="215"/>
        <end position="220"/>
    </location>
</feature>
<feature type="helix" evidence="11">
    <location>
        <begin position="225"/>
        <end position="233"/>
    </location>
</feature>
<feature type="strand" evidence="11">
    <location>
        <begin position="237"/>
        <end position="242"/>
    </location>
</feature>
<feature type="turn" evidence="11">
    <location>
        <begin position="243"/>
        <end position="247"/>
    </location>
</feature>
<feature type="strand" evidence="10">
    <location>
        <begin position="248"/>
        <end position="251"/>
    </location>
</feature>
<feature type="strand" evidence="11">
    <location>
        <begin position="255"/>
        <end position="258"/>
    </location>
</feature>
<feature type="strand" evidence="11">
    <location>
        <begin position="261"/>
        <end position="267"/>
    </location>
</feature>
<feature type="strand" evidence="10">
    <location>
        <begin position="269"/>
        <end position="271"/>
    </location>
</feature>
<feature type="helix" evidence="11">
    <location>
        <begin position="272"/>
        <end position="278"/>
    </location>
</feature>
<feature type="strand" evidence="11">
    <location>
        <begin position="279"/>
        <end position="281"/>
    </location>
</feature>
<feature type="turn" evidence="10">
    <location>
        <begin position="283"/>
        <end position="285"/>
    </location>
</feature>
<feature type="strand" evidence="10">
    <location>
        <begin position="286"/>
        <end position="288"/>
    </location>
</feature>
<feature type="strand" evidence="11">
    <location>
        <begin position="292"/>
        <end position="296"/>
    </location>
</feature>
<feature type="helix" evidence="11">
    <location>
        <begin position="301"/>
        <end position="319"/>
    </location>
</feature>
<feature type="helix" evidence="11">
    <location>
        <begin position="324"/>
        <end position="326"/>
    </location>
</feature>
<feature type="helix" evidence="11">
    <location>
        <begin position="327"/>
        <end position="330"/>
    </location>
</feature>
<feature type="strand" evidence="11">
    <location>
        <begin position="333"/>
        <end position="335"/>
    </location>
</feature>
<protein>
    <recommendedName>
        <fullName evidence="1">GMP reductase 2</fullName>
        <shortName evidence="1">GMPR 2</shortName>
        <ecNumber evidence="1">1.7.1.7</ecNumber>
    </recommendedName>
    <alternativeName>
        <fullName evidence="1">Guanosine 5'-monophosphate oxidoreductase 2</fullName>
        <shortName evidence="1">Guanosine monophosphate reductase 2</shortName>
    </alternativeName>
</protein>
<organism>
    <name type="scientific">Homo sapiens</name>
    <name type="common">Human</name>
    <dbReference type="NCBI Taxonomy" id="9606"/>
    <lineage>
        <taxon>Eukaryota</taxon>
        <taxon>Metazoa</taxon>
        <taxon>Chordata</taxon>
        <taxon>Craniata</taxon>
        <taxon>Vertebrata</taxon>
        <taxon>Euteleostomi</taxon>
        <taxon>Mammalia</taxon>
        <taxon>Eutheria</taxon>
        <taxon>Euarchontoglires</taxon>
        <taxon>Primates</taxon>
        <taxon>Haplorrhini</taxon>
        <taxon>Catarrhini</taxon>
        <taxon>Hominidae</taxon>
        <taxon>Homo</taxon>
    </lineage>
</organism>
<sequence length="348" mass="37874">MPHIDNDVKLDFKDVLLRPKRSTLKSRSEVDLTRSFSFRNSKQTYSGVPIIAANMDTVGTFEMAKVLCKFSLFTAVHKHYSLVQWQEFAGQNPDCLEHLAASSGTGSSDFEQLEQILEAIPQVKYICLDVANGYSEHFVEFVKDVRKRFPQHTIMAGNVVTGEMVEELILSGADIIKVGIGPGSVCTTRKKTGVGYPQLSAVMECADAAHGLKGHIISDGGCSCPGDVAKAFGAGADFVMLGGMLAGHSESGGELIERDGKKYKLFYGMSSEMAMKKYAGGVAEYRASEGKTVEVPFKGDVEHTIRDILGGIRSTCTYVGAAKLKELSRRTTFIRVTQQVNPIFSEAC</sequence>
<dbReference type="EC" id="1.7.1.7" evidence="1"/>
<dbReference type="EMBL" id="AF419346">
    <property type="protein sequence ID" value="AAN32701.1"/>
    <property type="molecule type" value="mRNA"/>
</dbReference>
<dbReference type="EMBL" id="AF135159">
    <property type="protein sequence ID" value="AAG09132.1"/>
    <property type="molecule type" value="mRNA"/>
</dbReference>
<dbReference type="EMBL" id="AB032903">
    <property type="protein sequence ID" value="BAA93080.1"/>
    <property type="molecule type" value="mRNA"/>
</dbReference>
<dbReference type="EMBL" id="BX161436">
    <property type="protein sequence ID" value="CAD61908.1"/>
    <property type="molecule type" value="mRNA"/>
</dbReference>
<dbReference type="EMBL" id="BX247993">
    <property type="protein sequence ID" value="CAD62327.1"/>
    <property type="molecule type" value="mRNA"/>
</dbReference>
<dbReference type="EMBL" id="CR457156">
    <property type="protein sequence ID" value="CAG33437.1"/>
    <property type="molecule type" value="mRNA"/>
</dbReference>
<dbReference type="EMBL" id="AL096870">
    <property type="status" value="NOT_ANNOTATED_CDS"/>
    <property type="molecule type" value="Genomic_DNA"/>
</dbReference>
<dbReference type="EMBL" id="CH471078">
    <property type="protein sequence ID" value="EAW66051.1"/>
    <property type="molecule type" value="Genomic_DNA"/>
</dbReference>
<dbReference type="EMBL" id="CH471078">
    <property type="protein sequence ID" value="EAW66053.1"/>
    <property type="molecule type" value="Genomic_DNA"/>
</dbReference>
<dbReference type="EMBL" id="CH471078">
    <property type="protein sequence ID" value="EAW66054.1"/>
    <property type="molecule type" value="Genomic_DNA"/>
</dbReference>
<dbReference type="EMBL" id="CH471078">
    <property type="protein sequence ID" value="EAW66056.1"/>
    <property type="molecule type" value="Genomic_DNA"/>
</dbReference>
<dbReference type="EMBL" id="CH471078">
    <property type="protein sequence ID" value="EAW66057.1"/>
    <property type="molecule type" value="Genomic_DNA"/>
</dbReference>
<dbReference type="EMBL" id="BC008021">
    <property type="protein sequence ID" value="AAH08021.2"/>
    <property type="molecule type" value="mRNA"/>
</dbReference>
<dbReference type="EMBL" id="BC009832">
    <property type="protein sequence ID" value="AAH09832.1"/>
    <property type="molecule type" value="mRNA"/>
</dbReference>
<dbReference type="EMBL" id="BC093039">
    <property type="protein sequence ID" value="AAH93039.1"/>
    <property type="molecule type" value="mRNA"/>
</dbReference>
<dbReference type="CCDS" id="CCDS41935.1">
    <molecule id="Q9P2T1-1"/>
</dbReference>
<dbReference type="CCDS" id="CCDS45087.1">
    <molecule id="Q9P2T1-2"/>
</dbReference>
<dbReference type="CCDS" id="CCDS61419.1">
    <molecule id="Q9P2T1-3"/>
</dbReference>
<dbReference type="RefSeq" id="NP_001002000.1">
    <molecule id="Q9P2T1-1"/>
    <property type="nucleotide sequence ID" value="NM_001002000.3"/>
</dbReference>
<dbReference type="RefSeq" id="NP_001002001.1">
    <molecule id="Q9P2T1-1"/>
    <property type="nucleotide sequence ID" value="NM_001002001.3"/>
</dbReference>
<dbReference type="RefSeq" id="NP_001002002.1">
    <molecule id="Q9P2T1-1"/>
    <property type="nucleotide sequence ID" value="NM_001002002.3"/>
</dbReference>
<dbReference type="RefSeq" id="NP_001269950.1">
    <property type="nucleotide sequence ID" value="NM_001283021.1"/>
</dbReference>
<dbReference type="RefSeq" id="NP_001269951.1">
    <property type="nucleotide sequence ID" value="NM_001283022.1"/>
</dbReference>
<dbReference type="RefSeq" id="NP_001269952.1">
    <molecule id="Q9P2T1-3"/>
    <property type="nucleotide sequence ID" value="NM_001283023.2"/>
</dbReference>
<dbReference type="RefSeq" id="NP_057660.2">
    <molecule id="Q9P2T1-2"/>
    <property type="nucleotide sequence ID" value="NM_016576.5"/>
</dbReference>
<dbReference type="PDB" id="2A7R">
    <property type="method" value="X-ray"/>
    <property type="resolution" value="3.00 A"/>
    <property type="chains" value="A/B/C/D=1-348"/>
</dbReference>
<dbReference type="PDB" id="2BZN">
    <property type="method" value="X-ray"/>
    <property type="resolution" value="2.15 A"/>
    <property type="chains" value="A/B/C/D/E/F/G/H=10-341"/>
</dbReference>
<dbReference type="PDB" id="2C6Q">
    <property type="method" value="X-ray"/>
    <property type="resolution" value="1.70 A"/>
    <property type="chains" value="A/B/C/D/E/F/G/H=10-341"/>
</dbReference>
<dbReference type="PDBsum" id="2A7R"/>
<dbReference type="PDBsum" id="2BZN"/>
<dbReference type="PDBsum" id="2C6Q"/>
<dbReference type="SMR" id="Q9P2T1"/>
<dbReference type="BioGRID" id="119443">
    <property type="interactions" value="21"/>
</dbReference>
<dbReference type="ComplexPortal" id="CPX-2154">
    <property type="entry name" value="Guanosine monophosphate reductase 2"/>
</dbReference>
<dbReference type="FunCoup" id="Q9P2T1">
    <property type="interactions" value="1341"/>
</dbReference>
<dbReference type="IntAct" id="Q9P2T1">
    <property type="interactions" value="5"/>
</dbReference>
<dbReference type="MINT" id="Q9P2T1"/>
<dbReference type="STRING" id="9606.ENSP00000454038"/>
<dbReference type="BindingDB" id="Q9P2T1"/>
<dbReference type="ChEMBL" id="CHEMBL4296017"/>
<dbReference type="GlyGen" id="Q9P2T1">
    <property type="glycosylation" value="1 site, 1 O-linked glycan (1 site)"/>
</dbReference>
<dbReference type="iPTMnet" id="Q9P2T1"/>
<dbReference type="PhosphoSitePlus" id="Q9P2T1"/>
<dbReference type="BioMuta" id="GMPR2"/>
<dbReference type="DMDM" id="25008511"/>
<dbReference type="jPOST" id="Q9P2T1"/>
<dbReference type="MassIVE" id="Q9P2T1"/>
<dbReference type="PeptideAtlas" id="Q9P2T1"/>
<dbReference type="ProteomicsDB" id="69657"/>
<dbReference type="ProteomicsDB" id="83896">
    <molecule id="Q9P2T1-1"/>
</dbReference>
<dbReference type="ProteomicsDB" id="83897">
    <molecule id="Q9P2T1-2"/>
</dbReference>
<dbReference type="Pumba" id="Q9P2T1"/>
<dbReference type="Antibodypedia" id="61">
    <property type="antibodies" value="108 antibodies from 17 providers"/>
</dbReference>
<dbReference type="DNASU" id="51292"/>
<dbReference type="Ensembl" id="ENST00000355299.8">
    <molecule id="Q9P2T1-1"/>
    <property type="protein sequence ID" value="ENSP00000347449.4"/>
    <property type="gene ID" value="ENSG00000100938.19"/>
</dbReference>
<dbReference type="Ensembl" id="ENST00000399440.7">
    <molecule id="Q9P2T1-1"/>
    <property type="protein sequence ID" value="ENSP00000382369.2"/>
    <property type="gene ID" value="ENSG00000100938.19"/>
</dbReference>
<dbReference type="Ensembl" id="ENST00000420554.6">
    <molecule id="Q9P2T1-2"/>
    <property type="protein sequence ID" value="ENSP00000392859.2"/>
    <property type="gene ID" value="ENSG00000100938.19"/>
</dbReference>
<dbReference type="Ensembl" id="ENST00000456667.7">
    <molecule id="Q9P2T1-3"/>
    <property type="protein sequence ID" value="ENSP00000405743.3"/>
    <property type="gene ID" value="ENSG00000100938.19"/>
</dbReference>
<dbReference type="Ensembl" id="ENST00000559836.5">
    <molecule id="Q9P2T1-1"/>
    <property type="protein sequence ID" value="ENSP00000453299.1"/>
    <property type="gene ID" value="ENSG00000100938.19"/>
</dbReference>
<dbReference type="Ensembl" id="ENST00000642276.1">
    <molecule id="Q9P2T1-1"/>
    <property type="protein sequence ID" value="ENSP00000496504.1"/>
    <property type="gene ID" value="ENSG00000284752.3"/>
</dbReference>
<dbReference type="Ensembl" id="ENST00000643803.1">
    <molecule id="Q9P2T1-3"/>
    <property type="protein sequence ID" value="ENSP00000495708.1"/>
    <property type="gene ID" value="ENSG00000284752.3"/>
</dbReference>
<dbReference type="Ensembl" id="ENST00000644066.1">
    <molecule id="Q9P2T1-1"/>
    <property type="protein sequence ID" value="ENSP00000494224.1"/>
    <property type="gene ID" value="ENSG00000284752.3"/>
</dbReference>
<dbReference type="Ensembl" id="ENST00000645781.1">
    <molecule id="Q9P2T1-2"/>
    <property type="protein sequence ID" value="ENSP00000496234.1"/>
    <property type="gene ID" value="ENSG00000284752.3"/>
</dbReference>
<dbReference type="Ensembl" id="ENST00000647320.3">
    <molecule id="Q9P2T1-1"/>
    <property type="protein sequence ID" value="ENSP00000495583.1"/>
    <property type="gene ID" value="ENSG00000284752.3"/>
</dbReference>
<dbReference type="GeneID" id="51292"/>
<dbReference type="KEGG" id="hsa:51292"/>
<dbReference type="MANE-Select" id="ENST00000399440.7">
    <property type="protein sequence ID" value="ENSP00000382369.2"/>
    <property type="RefSeq nucleotide sequence ID" value="NM_001002002.3"/>
    <property type="RefSeq protein sequence ID" value="NP_001002002.1"/>
</dbReference>
<dbReference type="UCSC" id="uc001wnr.5">
    <molecule id="Q9P2T1-1"/>
    <property type="organism name" value="human"/>
</dbReference>
<dbReference type="AGR" id="HGNC:4377"/>
<dbReference type="CTD" id="51292"/>
<dbReference type="DisGeNET" id="51292"/>
<dbReference type="GeneCards" id="GMPR2"/>
<dbReference type="HGNC" id="HGNC:4377">
    <property type="gene designation" value="GMPR2"/>
</dbReference>
<dbReference type="HPA" id="ENSG00000100938">
    <property type="expression patterns" value="Low tissue specificity"/>
</dbReference>
<dbReference type="MIM" id="610781">
    <property type="type" value="gene"/>
</dbReference>
<dbReference type="neXtProt" id="NX_Q9P2T1"/>
<dbReference type="OpenTargets" id="ENSG00000100938"/>
<dbReference type="PharmGKB" id="PA28762"/>
<dbReference type="VEuPathDB" id="HostDB:ENSG00000100938"/>
<dbReference type="eggNOG" id="KOG2550">
    <property type="taxonomic scope" value="Eukaryota"/>
</dbReference>
<dbReference type="GeneTree" id="ENSGT00940000159574"/>
<dbReference type="HOGENOM" id="CLU_022552_5_3_1"/>
<dbReference type="InParanoid" id="Q9P2T1"/>
<dbReference type="OrthoDB" id="418595at2759"/>
<dbReference type="PAN-GO" id="Q9P2T1">
    <property type="GO annotations" value="0 GO annotations based on evolutionary models"/>
</dbReference>
<dbReference type="PhylomeDB" id="Q9P2T1"/>
<dbReference type="TreeFam" id="TF300378"/>
<dbReference type="BRENDA" id="1.7.1.7">
    <property type="organism ID" value="2681"/>
</dbReference>
<dbReference type="PathwayCommons" id="Q9P2T1"/>
<dbReference type="Reactome" id="R-HSA-74217">
    <property type="pathway name" value="Purine salvage"/>
</dbReference>
<dbReference type="SignaLink" id="Q9P2T1"/>
<dbReference type="BioGRID-ORCS" id="51292">
    <property type="hits" value="9 hits in 1156 CRISPR screens"/>
</dbReference>
<dbReference type="ChiTaRS" id="GMPR2">
    <property type="organism name" value="human"/>
</dbReference>
<dbReference type="EvolutionaryTrace" id="Q9P2T1"/>
<dbReference type="GenomeRNAi" id="51292"/>
<dbReference type="Pharos" id="Q9P2T1">
    <property type="development level" value="Tbio"/>
</dbReference>
<dbReference type="PRO" id="PR:Q9P2T1"/>
<dbReference type="Proteomes" id="UP000005640">
    <property type="component" value="Chromosome 14"/>
</dbReference>
<dbReference type="RNAct" id="Q9P2T1">
    <property type="molecule type" value="protein"/>
</dbReference>
<dbReference type="Bgee" id="ENSG00000100938">
    <property type="expression patterns" value="Expressed in right adrenal gland and 100 other cell types or tissues"/>
</dbReference>
<dbReference type="ExpressionAtlas" id="Q9P2T1">
    <property type="expression patterns" value="baseline and differential"/>
</dbReference>
<dbReference type="GO" id="GO:0005829">
    <property type="term" value="C:cytosol"/>
    <property type="evidence" value="ECO:0000304"/>
    <property type="project" value="Reactome"/>
</dbReference>
<dbReference type="GO" id="GO:1902560">
    <property type="term" value="C:GMP reductase complex"/>
    <property type="evidence" value="ECO:0007669"/>
    <property type="project" value="InterPro"/>
</dbReference>
<dbReference type="GO" id="GO:0003920">
    <property type="term" value="F:GMP reductase activity"/>
    <property type="evidence" value="ECO:0000314"/>
    <property type="project" value="UniProtKB"/>
</dbReference>
<dbReference type="GO" id="GO:0046872">
    <property type="term" value="F:metal ion binding"/>
    <property type="evidence" value="ECO:0007669"/>
    <property type="project" value="UniProtKB-KW"/>
</dbReference>
<dbReference type="GO" id="GO:0046037">
    <property type="term" value="P:GMP metabolic process"/>
    <property type="evidence" value="ECO:0000314"/>
    <property type="project" value="UniProtKB"/>
</dbReference>
<dbReference type="GO" id="GO:0006144">
    <property type="term" value="P:purine nucleobase metabolic process"/>
    <property type="evidence" value="ECO:0007669"/>
    <property type="project" value="UniProtKB-KW"/>
</dbReference>
<dbReference type="CDD" id="cd00381">
    <property type="entry name" value="IMPDH"/>
    <property type="match status" value="1"/>
</dbReference>
<dbReference type="FunFam" id="3.20.20.70:FF:000012">
    <property type="entry name" value="GMP reductase"/>
    <property type="match status" value="1"/>
</dbReference>
<dbReference type="Gene3D" id="3.20.20.70">
    <property type="entry name" value="Aldolase class I"/>
    <property type="match status" value="1"/>
</dbReference>
<dbReference type="HAMAP" id="MF_00596">
    <property type="entry name" value="GMP_reduct_type1"/>
    <property type="match status" value="1"/>
</dbReference>
<dbReference type="InterPro" id="IPR013785">
    <property type="entry name" value="Aldolase_TIM"/>
</dbReference>
<dbReference type="InterPro" id="IPR050139">
    <property type="entry name" value="GMP_reductase"/>
</dbReference>
<dbReference type="InterPro" id="IPR005993">
    <property type="entry name" value="GMPR"/>
</dbReference>
<dbReference type="InterPro" id="IPR015875">
    <property type="entry name" value="IMP_DH/GMP_Rdtase_CS"/>
</dbReference>
<dbReference type="InterPro" id="IPR001093">
    <property type="entry name" value="IMP_DH_GMPRt"/>
</dbReference>
<dbReference type="NCBIfam" id="TIGR01305">
    <property type="entry name" value="GMP_reduct_1"/>
    <property type="match status" value="1"/>
</dbReference>
<dbReference type="NCBIfam" id="NF003470">
    <property type="entry name" value="PRK05096.1"/>
    <property type="match status" value="1"/>
</dbReference>
<dbReference type="PANTHER" id="PTHR43170">
    <property type="entry name" value="GMP REDUCTASE"/>
    <property type="match status" value="1"/>
</dbReference>
<dbReference type="PANTHER" id="PTHR43170:SF4">
    <property type="entry name" value="GMP REDUCTASE 2"/>
    <property type="match status" value="1"/>
</dbReference>
<dbReference type="Pfam" id="PF00478">
    <property type="entry name" value="IMPDH"/>
    <property type="match status" value="1"/>
</dbReference>
<dbReference type="PIRSF" id="PIRSF000235">
    <property type="entry name" value="GMP_reductase"/>
    <property type="match status" value="1"/>
</dbReference>
<dbReference type="SMART" id="SM01240">
    <property type="entry name" value="IMPDH"/>
    <property type="match status" value="1"/>
</dbReference>
<dbReference type="SUPFAM" id="SSF51412">
    <property type="entry name" value="Inosine monophosphate dehydrogenase (IMPDH)"/>
    <property type="match status" value="1"/>
</dbReference>
<dbReference type="PROSITE" id="PS00487">
    <property type="entry name" value="IMP_DH_GMP_RED"/>
    <property type="match status" value="1"/>
</dbReference>
<keyword id="KW-0002">3D-structure</keyword>
<keyword id="KW-0007">Acetylation</keyword>
<keyword id="KW-0025">Alternative splicing</keyword>
<keyword id="KW-0479">Metal-binding</keyword>
<keyword id="KW-0521">NADP</keyword>
<keyword id="KW-0560">Oxidoreductase</keyword>
<keyword id="KW-0630">Potassium</keyword>
<keyword id="KW-1267">Proteomics identification</keyword>
<keyword id="KW-0659">Purine metabolism</keyword>
<keyword id="KW-1185">Reference proteome</keyword>
<accession>Q9P2T1</accession>
<accession>D3DS66</accession>
<accession>Q567T0</accession>
<accession>Q6IAJ8</accession>
<accession>Q86T14</accession>
<comment type="function">
    <text evidence="1 2 3 4 5">Catalyzes the irreversible NADPH-dependent deamination of GMP to IMP. It functions in the conversion of nucleobase, nucleoside and nucleotide derivatives of G to A nucleotides, and in maintaining the intracellular balance of A and G nucleotides (PubMed:12009299, PubMed:12669231, PubMed:16359702, PubMed:22037469). Plays a role in modulating cellular differentiation (PubMed:12669231).</text>
</comment>
<comment type="catalytic activity">
    <reaction evidence="1 2 4 5">
        <text>IMP + NH4(+) + NADP(+) = GMP + NADPH + 2 H(+)</text>
        <dbReference type="Rhea" id="RHEA:17185"/>
        <dbReference type="ChEBI" id="CHEBI:15378"/>
        <dbReference type="ChEBI" id="CHEBI:28938"/>
        <dbReference type="ChEBI" id="CHEBI:57783"/>
        <dbReference type="ChEBI" id="CHEBI:58053"/>
        <dbReference type="ChEBI" id="CHEBI:58115"/>
        <dbReference type="ChEBI" id="CHEBI:58349"/>
        <dbReference type="EC" id="1.7.1.7"/>
    </reaction>
</comment>
<comment type="subunit">
    <text evidence="1 4 5">Homotetramer.</text>
</comment>
<comment type="interaction">
    <interactant intactId="EBI-2806548">
        <id>Q9P2T1</id>
    </interactant>
    <interactant intactId="EBI-10484590">
        <id>P36959</id>
        <label>GMPR</label>
    </interactant>
    <organismsDiffer>false</organismsDiffer>
    <experiments>2</experiments>
</comment>
<comment type="interaction">
    <interactant intactId="EBI-2806548">
        <id>Q9P2T1</id>
    </interactant>
    <interactant intactId="EBI-748397">
        <id>P50222</id>
        <label>MEOX2</label>
    </interactant>
    <organismsDiffer>false</organismsDiffer>
    <experiments>3</experiments>
</comment>
<comment type="alternative products">
    <event type="alternative splicing"/>
    <isoform>
        <id>Q9P2T1-1</id>
        <name>1</name>
        <sequence type="displayed"/>
    </isoform>
    <isoform>
        <id>Q9P2T1-2</id>
        <name>2</name>
        <sequence type="described" ref="VSP_041459"/>
    </isoform>
    <isoform>
        <id>Q9P2T1-3</id>
        <name>3</name>
        <sequence type="described" ref="VSP_054585"/>
    </isoform>
</comment>
<comment type="tissue specificity">
    <text evidence="2 3">Highly expressed in heart, skeletal muscle, kidney, brain, liver, prostate, spleen, placenta, testis and ovary. Low expression in colon, thymus and peripheral blood leukocytes.</text>
</comment>
<comment type="similarity">
    <text evidence="1">Belongs to the IMPDH/GMPR family. GuaC type 1 subfamily.</text>
</comment>
<name>GMPR2_HUMAN</name>
<reference key="1">
    <citation type="journal article" date="2002" name="Int. J. Biochem. Cell Biol.">
        <title>NADPH-dependent GMP reductase isoenzyme of human (GMPR2). Expression, purification, and kinetic properties.</title>
        <authorList>
            <person name="Deng Y."/>
            <person name="Wang Z."/>
            <person name="Ying K."/>
            <person name="Gu S."/>
            <person name="Ji C."/>
            <person name="Huang Y."/>
            <person name="Gu X."/>
            <person name="Wang Y."/>
            <person name="Xu Y."/>
            <person name="Li Y."/>
            <person name="Xie Y."/>
            <person name="Mao Y."/>
        </authorList>
    </citation>
    <scope>NUCLEOTIDE SEQUENCE [MRNA] (ISOFORM 1)</scope>
    <scope>FUNCTION</scope>
    <scope>CATALYTIC ACTIVITY</scope>
    <scope>TISSUE SPECIFICITY</scope>
    <source>
        <tissue>Fetal brain</tissue>
    </source>
</reference>
<reference key="2">
    <citation type="journal article" date="2003" name="J. Cancer Res. Clin. Oncol.">
        <title>Cloning and functional characterization of GMPR2, a novel human guanosine monophosphate reductase, which promotes the monocytic differentiation of HL-60 leukemia cells.</title>
        <authorList>
            <person name="Zhang J."/>
            <person name="Zhang W."/>
            <person name="Zou D."/>
            <person name="Chen G."/>
            <person name="Wan T."/>
            <person name="Zhang M."/>
            <person name="Cao X."/>
        </authorList>
    </citation>
    <scope>NUCLEOTIDE SEQUENCE [MRNA] (ISOFORM 1)</scope>
    <scope>FUNCTION</scope>
    <scope>TISSUE SPECIFICITY</scope>
</reference>
<reference key="3">
    <citation type="submission" date="1999-09" db="EMBL/GenBank/DDBJ databases">
        <title>A novel protein related to guanosine monophosphate reductase.</title>
        <authorList>
            <person name="Okaze H."/>
            <person name="Hayashi A."/>
            <person name="Kozuma S."/>
            <person name="Saito T."/>
        </authorList>
    </citation>
    <scope>NUCLEOTIDE SEQUENCE [MRNA] (ISOFORM 1)</scope>
</reference>
<reference key="4">
    <citation type="submission" date="2003-01" db="EMBL/GenBank/DDBJ databases">
        <title>Full-length cDNA libraries and normalization.</title>
        <authorList>
            <person name="Li W.B."/>
            <person name="Gruber C."/>
            <person name="Jessee J."/>
            <person name="Polayes D."/>
        </authorList>
    </citation>
    <scope>NUCLEOTIDE SEQUENCE [LARGE SCALE MRNA] (ISOFORMS 1 AND 3)</scope>
    <source>
        <tissue>Placenta</tissue>
        <tissue>T-cell</tissue>
    </source>
</reference>
<reference key="5">
    <citation type="submission" date="2004-06" db="EMBL/GenBank/DDBJ databases">
        <title>Cloning of human full open reading frames in Gateway(TM) system entry vector (pDONR201).</title>
        <authorList>
            <person name="Ebert L."/>
            <person name="Schick M."/>
            <person name="Neubert P."/>
            <person name="Schatten R."/>
            <person name="Henze S."/>
            <person name="Korn B."/>
        </authorList>
    </citation>
    <scope>NUCLEOTIDE SEQUENCE [LARGE SCALE MRNA] (ISOFORM 1)</scope>
</reference>
<reference key="6">
    <citation type="journal article" date="2003" name="Nature">
        <title>The DNA sequence and analysis of human chromosome 14.</title>
        <authorList>
            <person name="Heilig R."/>
            <person name="Eckenberg R."/>
            <person name="Petit J.-L."/>
            <person name="Fonknechten N."/>
            <person name="Da Silva C."/>
            <person name="Cattolico L."/>
            <person name="Levy M."/>
            <person name="Barbe V."/>
            <person name="De Berardinis V."/>
            <person name="Ureta-Vidal A."/>
            <person name="Pelletier E."/>
            <person name="Vico V."/>
            <person name="Anthouard V."/>
            <person name="Rowen L."/>
            <person name="Madan A."/>
            <person name="Qin S."/>
            <person name="Sun H."/>
            <person name="Du H."/>
            <person name="Pepin K."/>
            <person name="Artiguenave F."/>
            <person name="Robert C."/>
            <person name="Cruaud C."/>
            <person name="Bruels T."/>
            <person name="Jaillon O."/>
            <person name="Friedlander L."/>
            <person name="Samson G."/>
            <person name="Brottier P."/>
            <person name="Cure S."/>
            <person name="Segurens B."/>
            <person name="Aniere F."/>
            <person name="Samain S."/>
            <person name="Crespeau H."/>
            <person name="Abbasi N."/>
            <person name="Aiach N."/>
            <person name="Boscus D."/>
            <person name="Dickhoff R."/>
            <person name="Dors M."/>
            <person name="Dubois I."/>
            <person name="Friedman C."/>
            <person name="Gouyvenoux M."/>
            <person name="James R."/>
            <person name="Madan A."/>
            <person name="Mairey-Estrada B."/>
            <person name="Mangenot S."/>
            <person name="Martins N."/>
            <person name="Menard M."/>
            <person name="Oztas S."/>
            <person name="Ratcliffe A."/>
            <person name="Shaffer T."/>
            <person name="Trask B."/>
            <person name="Vacherie B."/>
            <person name="Bellemere C."/>
            <person name="Belser C."/>
            <person name="Besnard-Gonnet M."/>
            <person name="Bartol-Mavel D."/>
            <person name="Boutard M."/>
            <person name="Briez-Silla S."/>
            <person name="Combette S."/>
            <person name="Dufosse-Laurent V."/>
            <person name="Ferron C."/>
            <person name="Lechaplais C."/>
            <person name="Louesse C."/>
            <person name="Muselet D."/>
            <person name="Magdelenat G."/>
            <person name="Pateau E."/>
            <person name="Petit E."/>
            <person name="Sirvain-Trukniewicz P."/>
            <person name="Trybou A."/>
            <person name="Vega-Czarny N."/>
            <person name="Bataille E."/>
            <person name="Bluet E."/>
            <person name="Bordelais I."/>
            <person name="Dubois M."/>
            <person name="Dumont C."/>
            <person name="Guerin T."/>
            <person name="Haffray S."/>
            <person name="Hammadi R."/>
            <person name="Muanga J."/>
            <person name="Pellouin V."/>
            <person name="Robert D."/>
            <person name="Wunderle E."/>
            <person name="Gauguet G."/>
            <person name="Roy A."/>
            <person name="Sainte-Marthe L."/>
            <person name="Verdier J."/>
            <person name="Verdier-Discala C."/>
            <person name="Hillier L.W."/>
            <person name="Fulton L."/>
            <person name="McPherson J."/>
            <person name="Matsuda F."/>
            <person name="Wilson R."/>
            <person name="Scarpelli C."/>
            <person name="Gyapay G."/>
            <person name="Wincker P."/>
            <person name="Saurin W."/>
            <person name="Quetier F."/>
            <person name="Waterston R."/>
            <person name="Hood L."/>
            <person name="Weissenbach J."/>
        </authorList>
    </citation>
    <scope>NUCLEOTIDE SEQUENCE [LARGE SCALE GENOMIC DNA]</scope>
</reference>
<reference key="7">
    <citation type="submission" date="2005-09" db="EMBL/GenBank/DDBJ databases">
        <authorList>
            <person name="Mural R.J."/>
            <person name="Istrail S."/>
            <person name="Sutton G.G."/>
            <person name="Florea L."/>
            <person name="Halpern A.L."/>
            <person name="Mobarry C.M."/>
            <person name="Lippert R."/>
            <person name="Walenz B."/>
            <person name="Shatkay H."/>
            <person name="Dew I."/>
            <person name="Miller J.R."/>
            <person name="Flanigan M.J."/>
            <person name="Edwards N.J."/>
            <person name="Bolanos R."/>
            <person name="Fasulo D."/>
            <person name="Halldorsson B.V."/>
            <person name="Hannenhalli S."/>
            <person name="Turner R."/>
            <person name="Yooseph S."/>
            <person name="Lu F."/>
            <person name="Nusskern D.R."/>
            <person name="Shue B.C."/>
            <person name="Zheng X.H."/>
            <person name="Zhong F."/>
            <person name="Delcher A.L."/>
            <person name="Huson D.H."/>
            <person name="Kravitz S.A."/>
            <person name="Mouchard L."/>
            <person name="Reinert K."/>
            <person name="Remington K.A."/>
            <person name="Clark A.G."/>
            <person name="Waterman M.S."/>
            <person name="Eichler E.E."/>
            <person name="Adams M.D."/>
            <person name="Hunkapiller M.W."/>
            <person name="Myers E.W."/>
            <person name="Venter J.C."/>
        </authorList>
    </citation>
    <scope>NUCLEOTIDE SEQUENCE [LARGE SCALE GENOMIC DNA]</scope>
</reference>
<reference key="8">
    <citation type="journal article" date="2004" name="Genome Res.">
        <title>The status, quality, and expansion of the NIH full-length cDNA project: the Mammalian Gene Collection (MGC).</title>
        <authorList>
            <consortium name="The MGC Project Team"/>
        </authorList>
    </citation>
    <scope>NUCLEOTIDE SEQUENCE [LARGE SCALE MRNA] (ISOFORMS 1 AND 2)</scope>
    <source>
        <tissue>Lung</tissue>
        <tissue>Placenta</tissue>
    </source>
</reference>
<reference key="9">
    <citation type="journal article" date="2009" name="Science">
        <title>Lysine acetylation targets protein complexes and co-regulates major cellular functions.</title>
        <authorList>
            <person name="Choudhary C."/>
            <person name="Kumar C."/>
            <person name="Gnad F."/>
            <person name="Nielsen M.L."/>
            <person name="Rehman M."/>
            <person name="Walther T.C."/>
            <person name="Olsen J.V."/>
            <person name="Mann M."/>
        </authorList>
    </citation>
    <scope>ACETYLATION [LARGE SCALE ANALYSIS] AT LYS-291</scope>
    <scope>IDENTIFICATION BY MASS SPECTROMETRY [LARGE SCALE ANALYSIS]</scope>
</reference>
<reference key="10">
    <citation type="journal article" date="2011" name="BMC Syst. Biol.">
        <title>Initial characterization of the human central proteome.</title>
        <authorList>
            <person name="Burkard T.R."/>
            <person name="Planyavsky M."/>
            <person name="Kaupe I."/>
            <person name="Breitwieser F.P."/>
            <person name="Buerckstuemmer T."/>
            <person name="Bennett K.L."/>
            <person name="Superti-Furga G."/>
            <person name="Colinge J."/>
        </authorList>
    </citation>
    <scope>IDENTIFICATION BY MASS SPECTROMETRY [LARGE SCALE ANALYSIS]</scope>
</reference>
<reference key="11">
    <citation type="journal article" date="2014" name="J. Proteomics">
        <title>An enzyme assisted RP-RPLC approach for in-depth analysis of human liver phosphoproteome.</title>
        <authorList>
            <person name="Bian Y."/>
            <person name="Song C."/>
            <person name="Cheng K."/>
            <person name="Dong M."/>
            <person name="Wang F."/>
            <person name="Huang J."/>
            <person name="Sun D."/>
            <person name="Wang L."/>
            <person name="Ye M."/>
            <person name="Zou H."/>
        </authorList>
    </citation>
    <scope>IDENTIFICATION BY MASS SPECTROMETRY [LARGE SCALE ANALYSIS]</scope>
    <source>
        <tissue>Liver</tissue>
    </source>
</reference>
<reference key="12">
    <citation type="journal article" date="2006" name="J. Mol. Biol.">
        <title>Crystal structure of human guanosine monophosphate reductase 2 (GMPR2) in complex with GMP.</title>
        <authorList>
            <person name="Li J."/>
            <person name="Wei Z."/>
            <person name="Zheng M."/>
            <person name="Gu X."/>
            <person name="Deng Y."/>
            <person name="Qiu R."/>
            <person name="Chen F."/>
            <person name="Ji C."/>
            <person name="Gong W."/>
            <person name="Xie Y."/>
            <person name="Mao Y."/>
        </authorList>
    </citation>
    <scope>X-RAY CRYSTALLOGRAPHY (3.0 ANGSTROMS) IN COMPLEX WITH GMP</scope>
    <scope>CATALYTIC ACTIVITY</scope>
    <scope>FUNCTION</scope>
    <scope>ACTIVE SITE</scope>
    <scope>SUBUNIT</scope>
    <scope>MUTAGENESIS OF CYS-186</scope>
</reference>
<reference key="13">
    <citation type="journal article" date="2011" name="Nat. Chem. Biol.">
        <title>Cofactor mobility determines reaction outcome in the IMPDH and GMPR (beta-alpha)8 barrel enzymes.</title>
        <authorList>
            <person name="Patton G.C."/>
            <person name="Stenmark P."/>
            <person name="Gollapalli D.R."/>
            <person name="Sevastik R."/>
            <person name="Kursula P."/>
            <person name="Flodin S."/>
            <person name="Schuler H."/>
            <person name="Swales C.T."/>
            <person name="Eklund H."/>
            <person name="Himo F."/>
            <person name="Nordlund P."/>
            <person name="Hedstrom L."/>
        </authorList>
    </citation>
    <scope>X-RAY CRYSTALLOGRAPHY (1.7 ANGSTROMS) OF 10-341 IN COMPLEX WITH IMP AND NADP</scope>
    <scope>CATALYTIC ACTIVITY</scope>
    <scope>FUNCTION</scope>
    <scope>ACTIVE SITE</scope>
    <scope>SUBUNIT</scope>
    <scope>MUTAGENESIS OF CYS-186; THR-188 AND GLU-289</scope>
</reference>
<gene>
    <name evidence="1" type="primary">GMPR2</name>
</gene>